<keyword id="KW-0067">ATP-binding</keyword>
<keyword id="KW-0963">Cytoplasm</keyword>
<keyword id="KW-0418">Kinase</keyword>
<keyword id="KW-0444">Lipid biosynthesis</keyword>
<keyword id="KW-0443">Lipid metabolism</keyword>
<keyword id="KW-0460">Magnesium</keyword>
<keyword id="KW-0479">Metal-binding</keyword>
<keyword id="KW-0547">Nucleotide-binding</keyword>
<keyword id="KW-0594">Phospholipid biosynthesis</keyword>
<keyword id="KW-1208">Phospholipid metabolism</keyword>
<keyword id="KW-1185">Reference proteome</keyword>
<keyword id="KW-0808">Transferase</keyword>
<accession>Q1QUK4</accession>
<reference key="1">
    <citation type="journal article" date="2011" name="Stand. Genomic Sci.">
        <title>Complete genome sequence of the halophilic and highly halotolerant Chromohalobacter salexigens type strain (1H11(T)).</title>
        <authorList>
            <person name="Copeland A."/>
            <person name="O'Connor K."/>
            <person name="Lucas S."/>
            <person name="Lapidus A."/>
            <person name="Berry K.W."/>
            <person name="Detter J.C."/>
            <person name="Del Rio T.G."/>
            <person name="Hammon N."/>
            <person name="Dalin E."/>
            <person name="Tice H."/>
            <person name="Pitluck S."/>
            <person name="Bruce D."/>
            <person name="Goodwin L."/>
            <person name="Han C."/>
            <person name="Tapia R."/>
            <person name="Saunders E."/>
            <person name="Schmutz J."/>
            <person name="Brettin T."/>
            <person name="Larimer F."/>
            <person name="Land M."/>
            <person name="Hauser L."/>
            <person name="Vargas C."/>
            <person name="Nieto J.J."/>
            <person name="Kyrpides N.C."/>
            <person name="Ivanova N."/>
            <person name="Goker M."/>
            <person name="Klenk H.P."/>
            <person name="Csonka L.N."/>
            <person name="Woyke T."/>
        </authorList>
    </citation>
    <scope>NUCLEOTIDE SEQUENCE [LARGE SCALE GENOMIC DNA]</scope>
    <source>
        <strain>ATCC BAA-138 / DSM 3043 / CIP 106854 / NCIMB 13768 / 1H11</strain>
    </source>
</reference>
<gene>
    <name type="ordered locus">Csal_2507</name>
</gene>
<feature type="chain" id="PRO_0000292140" description="Probable lipid kinase YegS-like">
    <location>
        <begin position="1"/>
        <end position="311"/>
    </location>
</feature>
<feature type="domain" description="DAGKc" evidence="1">
    <location>
        <begin position="9"/>
        <end position="140"/>
    </location>
</feature>
<feature type="active site" description="Proton acceptor" evidence="1">
    <location>
        <position position="281"/>
    </location>
</feature>
<feature type="binding site" evidence="1">
    <location>
        <position position="47"/>
    </location>
    <ligand>
        <name>ATP</name>
        <dbReference type="ChEBI" id="CHEBI:30616"/>
    </ligand>
</feature>
<feature type="binding site" evidence="1">
    <location>
        <begin position="73"/>
        <end position="79"/>
    </location>
    <ligand>
        <name>ATP</name>
        <dbReference type="ChEBI" id="CHEBI:30616"/>
    </ligand>
</feature>
<feature type="binding site" evidence="1">
    <location>
        <position position="102"/>
    </location>
    <ligand>
        <name>ATP</name>
        <dbReference type="ChEBI" id="CHEBI:30616"/>
    </ligand>
</feature>
<feature type="binding site" evidence="1">
    <location>
        <position position="221"/>
    </location>
    <ligand>
        <name>Mg(2+)</name>
        <dbReference type="ChEBI" id="CHEBI:18420"/>
    </ligand>
</feature>
<feature type="binding site" evidence="1">
    <location>
        <position position="224"/>
    </location>
    <ligand>
        <name>Mg(2+)</name>
        <dbReference type="ChEBI" id="CHEBI:18420"/>
    </ligand>
</feature>
<feature type="binding site" evidence="1">
    <location>
        <position position="226"/>
    </location>
    <ligand>
        <name>Mg(2+)</name>
        <dbReference type="ChEBI" id="CHEBI:18420"/>
    </ligand>
</feature>
<organism>
    <name type="scientific">Chromohalobacter salexigens (strain ATCC BAA-138 / DSM 3043 / CIP 106854 / NCIMB 13768 / 1H11)</name>
    <dbReference type="NCBI Taxonomy" id="290398"/>
    <lineage>
        <taxon>Bacteria</taxon>
        <taxon>Pseudomonadati</taxon>
        <taxon>Pseudomonadota</taxon>
        <taxon>Gammaproteobacteria</taxon>
        <taxon>Oceanospirillales</taxon>
        <taxon>Halomonadaceae</taxon>
        <taxon>Chromohalobacter</taxon>
    </lineage>
</organism>
<comment type="function">
    <text evidence="1">Probably phosphorylates lipids; the in vivo substrate is unknown.</text>
</comment>
<comment type="cofactor">
    <cofactor evidence="1">
        <name>Mg(2+)</name>
        <dbReference type="ChEBI" id="CHEBI:18420"/>
    </cofactor>
    <cofactor evidence="1">
        <name>Ca(2+)</name>
        <dbReference type="ChEBI" id="CHEBI:29108"/>
    </cofactor>
    <text evidence="1">Binds 1 Mg(2+) ion per subunit. Ca(2+) may be able to substitute.</text>
</comment>
<comment type="subcellular location">
    <subcellularLocation>
        <location evidence="1">Cytoplasm</location>
    </subcellularLocation>
</comment>
<comment type="similarity">
    <text evidence="1">Belongs to the diacylglycerol/lipid kinase family. YegS lipid kinase subfamily.</text>
</comment>
<evidence type="ECO:0000255" key="1">
    <source>
        <dbReference type="HAMAP-Rule" id="MF_01377"/>
    </source>
</evidence>
<proteinExistence type="inferred from homology"/>
<sequence>MNETIQPCEHDGDTWLILNGKSAQLPEVREAVGRVREAGHHLAVRVTWEGGDGVRLAREASEAGIARVIAGGGDGTVNEIVGGLMQLASETRPALGILPLGSANDFAGGLGLPEEPYEALRVALETPPRRVDVGTLGDDYFINLASGGFGAQITNSTPAPLKRLLGGGAYSLMGMLKAWNYQPYQGRLRFPDGERNVPLFLLALGNGCQAGGGQQLAPLAKIDDGLLELLIVRHFTSLREMKQLIDELENLPESGDFVEYLQVPWVEFESEHALPLNLDGEPCFHENFRAALMPGALCLAAPEGSALLSHQ</sequence>
<dbReference type="EC" id="2.7.1.-" evidence="1"/>
<dbReference type="EMBL" id="CP000285">
    <property type="protein sequence ID" value="ABE59854.1"/>
    <property type="molecule type" value="Genomic_DNA"/>
</dbReference>
<dbReference type="RefSeq" id="WP_011507800.1">
    <property type="nucleotide sequence ID" value="NC_007963.1"/>
</dbReference>
<dbReference type="SMR" id="Q1QUK4"/>
<dbReference type="STRING" id="290398.Csal_2507"/>
<dbReference type="GeneID" id="95335211"/>
<dbReference type="KEGG" id="csa:Csal_2507"/>
<dbReference type="eggNOG" id="COG1597">
    <property type="taxonomic scope" value="Bacteria"/>
</dbReference>
<dbReference type="HOGENOM" id="CLU_045532_1_1_6"/>
<dbReference type="OrthoDB" id="142078at2"/>
<dbReference type="Proteomes" id="UP000000239">
    <property type="component" value="Chromosome"/>
</dbReference>
<dbReference type="GO" id="GO:0005737">
    <property type="term" value="C:cytoplasm"/>
    <property type="evidence" value="ECO:0007669"/>
    <property type="project" value="UniProtKB-SubCell"/>
</dbReference>
<dbReference type="GO" id="GO:0005886">
    <property type="term" value="C:plasma membrane"/>
    <property type="evidence" value="ECO:0007669"/>
    <property type="project" value="TreeGrafter"/>
</dbReference>
<dbReference type="GO" id="GO:0005524">
    <property type="term" value="F:ATP binding"/>
    <property type="evidence" value="ECO:0007669"/>
    <property type="project" value="UniProtKB-UniRule"/>
</dbReference>
<dbReference type="GO" id="GO:0001727">
    <property type="term" value="F:lipid kinase activity"/>
    <property type="evidence" value="ECO:0007669"/>
    <property type="project" value="UniProtKB-UniRule"/>
</dbReference>
<dbReference type="GO" id="GO:0000287">
    <property type="term" value="F:magnesium ion binding"/>
    <property type="evidence" value="ECO:0007669"/>
    <property type="project" value="UniProtKB-UniRule"/>
</dbReference>
<dbReference type="GO" id="GO:0008654">
    <property type="term" value="P:phospholipid biosynthetic process"/>
    <property type="evidence" value="ECO:0007669"/>
    <property type="project" value="UniProtKB-UniRule"/>
</dbReference>
<dbReference type="Gene3D" id="2.60.200.40">
    <property type="match status" value="1"/>
</dbReference>
<dbReference type="Gene3D" id="3.40.50.10330">
    <property type="entry name" value="Probable inorganic polyphosphate/atp-NAD kinase, domain 1"/>
    <property type="match status" value="1"/>
</dbReference>
<dbReference type="HAMAP" id="MF_01377">
    <property type="entry name" value="YegS"/>
    <property type="match status" value="1"/>
</dbReference>
<dbReference type="InterPro" id="IPR017438">
    <property type="entry name" value="ATP-NAD_kinase_N"/>
</dbReference>
<dbReference type="InterPro" id="IPR005218">
    <property type="entry name" value="Diacylglycerol/lipid_kinase"/>
</dbReference>
<dbReference type="InterPro" id="IPR001206">
    <property type="entry name" value="Diacylglycerol_kinase_cat_dom"/>
</dbReference>
<dbReference type="InterPro" id="IPR022433">
    <property type="entry name" value="Lip_kinase_YegS"/>
</dbReference>
<dbReference type="InterPro" id="IPR050187">
    <property type="entry name" value="Lipid_Phosphate_FormReg"/>
</dbReference>
<dbReference type="InterPro" id="IPR016064">
    <property type="entry name" value="NAD/diacylglycerol_kinase_sf"/>
</dbReference>
<dbReference type="InterPro" id="IPR045540">
    <property type="entry name" value="YegS/DAGK_C"/>
</dbReference>
<dbReference type="NCBIfam" id="NF009602">
    <property type="entry name" value="PRK13054.1"/>
    <property type="match status" value="1"/>
</dbReference>
<dbReference type="NCBIfam" id="TIGR00147">
    <property type="entry name" value="YegS/Rv2252/BmrU family lipid kinase"/>
    <property type="match status" value="1"/>
</dbReference>
<dbReference type="PANTHER" id="PTHR12358:SF106">
    <property type="entry name" value="LIPID KINASE YEGS"/>
    <property type="match status" value="1"/>
</dbReference>
<dbReference type="PANTHER" id="PTHR12358">
    <property type="entry name" value="SPHINGOSINE KINASE"/>
    <property type="match status" value="1"/>
</dbReference>
<dbReference type="Pfam" id="PF00781">
    <property type="entry name" value="DAGK_cat"/>
    <property type="match status" value="1"/>
</dbReference>
<dbReference type="Pfam" id="PF19279">
    <property type="entry name" value="YegS_C"/>
    <property type="match status" value="1"/>
</dbReference>
<dbReference type="SMART" id="SM00046">
    <property type="entry name" value="DAGKc"/>
    <property type="match status" value="1"/>
</dbReference>
<dbReference type="SUPFAM" id="SSF111331">
    <property type="entry name" value="NAD kinase/diacylglycerol kinase-like"/>
    <property type="match status" value="1"/>
</dbReference>
<dbReference type="PROSITE" id="PS50146">
    <property type="entry name" value="DAGK"/>
    <property type="match status" value="1"/>
</dbReference>
<protein>
    <recommendedName>
        <fullName evidence="1">Probable lipid kinase YegS-like</fullName>
        <ecNumber evidence="1">2.7.1.-</ecNumber>
    </recommendedName>
</protein>
<name>YEGS_CHRSD</name>